<comment type="subunit">
    <text evidence="2">Part of a tripartite efflux system composed of MdtA, MdtB and MdtC. MdtC forms a heteromultimer with MdtB.</text>
</comment>
<comment type="subcellular location">
    <subcellularLocation>
        <location evidence="2">Cell inner membrane</location>
        <topology evidence="2">Multi-pass membrane protein</topology>
    </subcellularLocation>
</comment>
<comment type="similarity">
    <text evidence="2">Belongs to the resistance-nodulation-cell division (RND) (TC 2.A.6) family. MdtC subfamily.</text>
</comment>
<sequence length="1026" mass="110965">MRFFALFIYRPVATILIAAAITLCGILGFRLLPVAPLPQVDFPVIMVSASLPGASPETMASSVATPLERSLGRIAGVNEMTSSSSLGSTRIILEFNFDRDINGAARDVQAAINAAQSLLPGGMPSRPTYRKANPSDAPIMILTLTSESWSQGKLYDFASTQLAQTIAQIDGVGDVDVGGSSLPAVRVGLNPQALFNQGVSLDEVREAIDSANVRRPQGAIEDSVHRWQIQTNDELKTAAEYQPLIIHYNNGAAVRLGDVASVTDSVQDVRNAGMTNAKPAILLMIRKLPEANIIQTVDGIRAKLPELRAMIPAAIDLQIAQDRSPTIRASLQEVEETLAISVALVILVVFLFLRSGRATLIPAVAVPVSLIGTFAAMYLCGFSLNNLSLMALTIATGFVVDDAIVVLENIARHLEAGMKPLQAALQGTREVGFTVISMSLSLVAVFLPLLLMGGLPGRLLREFAVTLSVAIGISLVVSLTLTPMMCGWMLKSSKPRTQPRKRGVGRLLVALQQGYGTSLKWVLNHTRLVGVVFLGTVALNIWLYIAIPKTFFPEQDTGVLMGGIQADQSISFQAMRGKLQDFMKIIRDDPAVNNVTGFTGGSRVNSGMMFITLKPRGERKETAQQIIDRLRVKLAKEPGARLFLMAVQDIRVGGRQANASYQYTLLSDSLAALREWEPKIRKALSALPQLADVNSDQQDNGAEMNLIYDRDTMSRLGIDVQAANSLLNNAFGQRQISTIYQPMNQYKVVMEVDPRYSQDISALEKMFVINRDGKAIPLSYFAQWRPANAPLSVNHQGLSAASTIAFNLPTGTSLSQATEAINRTMTQLGVPSTVRGSFSGTAQVFQQTMNSQLILIVAAIATVYIVLGILYESYVHPLTILSTLPSAGVGALLALELFNAPFSLIALIGIMLLIGIVKKNAIMMVDFALEAQRSGGLTPEQAIFQACLLRFRPIMMTTLAALFGALPLVLSGGDGSELRQPLGITIVGGLVMSQLLTLYTTPVVYLFFDRLRLRFSRKNSKPVVEI</sequence>
<reference key="1">
    <citation type="journal article" date="2001" name="Nature">
        <title>Complete genome sequence of Salmonella enterica serovar Typhimurium LT2.</title>
        <authorList>
            <person name="McClelland M."/>
            <person name="Sanderson K.E."/>
            <person name="Spieth J."/>
            <person name="Clifton S.W."/>
            <person name="Latreille P."/>
            <person name="Courtney L."/>
            <person name="Porwollik S."/>
            <person name="Ali J."/>
            <person name="Dante M."/>
            <person name="Du F."/>
            <person name="Hou S."/>
            <person name="Layman D."/>
            <person name="Leonard S."/>
            <person name="Nguyen C."/>
            <person name="Scott K."/>
            <person name="Holmes A."/>
            <person name="Grewal N."/>
            <person name="Mulvaney E."/>
            <person name="Ryan E."/>
            <person name="Sun H."/>
            <person name="Florea L."/>
            <person name="Miller W."/>
            <person name="Stoneking T."/>
            <person name="Nhan M."/>
            <person name="Waterston R."/>
            <person name="Wilson R.K."/>
        </authorList>
    </citation>
    <scope>NUCLEOTIDE SEQUENCE [LARGE SCALE GENOMIC DNA]</scope>
    <source>
        <strain>LT2 / SGSC1412 / ATCC 700720</strain>
    </source>
</reference>
<feature type="chain" id="PRO_0000161837" description="Multidrug resistance protein MdtC">
    <location>
        <begin position="1"/>
        <end position="1026"/>
    </location>
</feature>
<feature type="topological domain" description="Cytoplasmic" evidence="1">
    <location>
        <begin position="1"/>
        <end position="6"/>
    </location>
</feature>
<feature type="transmembrane region" description="Helical" evidence="2">
    <location>
        <begin position="7"/>
        <end position="29"/>
    </location>
</feature>
<feature type="topological domain" description="Periplasmic" evidence="1">
    <location>
        <begin position="30"/>
        <end position="335"/>
    </location>
</feature>
<feature type="transmembrane region" description="Helical" evidence="2">
    <location>
        <begin position="336"/>
        <end position="353"/>
    </location>
</feature>
<feature type="topological domain" description="Cytoplasmic" evidence="1">
    <location>
        <begin position="354"/>
        <end position="359"/>
    </location>
</feature>
<feature type="transmembrane region" description="Helical" evidence="2">
    <location>
        <begin position="360"/>
        <end position="379"/>
    </location>
</feature>
<feature type="topological domain" description="Periplasmic" evidence="1">
    <location>
        <begin position="380"/>
        <end position="388"/>
    </location>
</feature>
<feature type="transmembrane region" description="Helical" evidence="2">
    <location>
        <begin position="389"/>
        <end position="411"/>
    </location>
</feature>
<feature type="topological domain" description="Cytoplasmic" evidence="1">
    <location>
        <begin position="412"/>
        <end position="430"/>
    </location>
</feature>
<feature type="transmembrane region" description="Helical" evidence="2">
    <location>
        <begin position="431"/>
        <end position="453"/>
    </location>
</feature>
<feature type="topological domain" description="Periplasmic" evidence="1">
    <location>
        <begin position="454"/>
        <end position="467"/>
    </location>
</feature>
<feature type="transmembrane region" description="Helical" evidence="2">
    <location>
        <begin position="468"/>
        <end position="490"/>
    </location>
</feature>
<feature type="topological domain" description="Cytoplasmic" evidence="1">
    <location>
        <begin position="491"/>
        <end position="852"/>
    </location>
</feature>
<feature type="transmembrane region" description="Helical" evidence="2">
    <location>
        <begin position="853"/>
        <end position="875"/>
    </location>
</feature>
<feature type="topological domain" description="Periplasmic" evidence="1">
    <location>
        <begin position="876"/>
        <end position="894"/>
    </location>
</feature>
<feature type="transmembrane region" description="Helical" evidence="2">
    <location>
        <begin position="895"/>
        <end position="917"/>
    </location>
</feature>
<feature type="topological domain" description="Cytoplasmic" evidence="1">
    <location>
        <begin position="918"/>
        <end position="947"/>
    </location>
</feature>
<feature type="transmembrane region" description="Helical" evidence="2">
    <location>
        <begin position="948"/>
        <end position="970"/>
    </location>
</feature>
<feature type="topological domain" description="Periplasmic" evidence="1">
    <location>
        <begin position="971"/>
        <end position="984"/>
    </location>
</feature>
<feature type="transmembrane region" description="Helical" evidence="2">
    <location>
        <begin position="985"/>
        <end position="1007"/>
    </location>
</feature>
<feature type="topological domain" description="Cytoplasmic" evidence="1">
    <location>
        <begin position="1008"/>
        <end position="1026"/>
    </location>
</feature>
<evidence type="ECO:0000255" key="1"/>
<evidence type="ECO:0000255" key="2">
    <source>
        <dbReference type="HAMAP-Rule" id="MF_01424"/>
    </source>
</evidence>
<dbReference type="EMBL" id="AE006468">
    <property type="protein sequence ID" value="AAL21032.1"/>
    <property type="molecule type" value="Genomic_DNA"/>
</dbReference>
<dbReference type="RefSeq" id="WP_001210077.1">
    <property type="nucleotide sequence ID" value="NC_003197.2"/>
</dbReference>
<dbReference type="SMR" id="Q8ZNQ1"/>
<dbReference type="STRING" id="99287.STM2128"/>
<dbReference type="PaxDb" id="99287-STM2128"/>
<dbReference type="KEGG" id="stm:STM2128"/>
<dbReference type="PATRIC" id="fig|99287.12.peg.2253"/>
<dbReference type="HOGENOM" id="CLU_002755_1_2_6"/>
<dbReference type="OMA" id="LEPFIIM"/>
<dbReference type="PhylomeDB" id="Q8ZNQ1"/>
<dbReference type="BioCyc" id="SENT99287:STM2128-MONOMER"/>
<dbReference type="Proteomes" id="UP000001014">
    <property type="component" value="Chromosome"/>
</dbReference>
<dbReference type="GO" id="GO:0005886">
    <property type="term" value="C:plasma membrane"/>
    <property type="evidence" value="ECO:0000318"/>
    <property type="project" value="GO_Central"/>
</dbReference>
<dbReference type="GO" id="GO:0042910">
    <property type="term" value="F:xenobiotic transmembrane transporter activity"/>
    <property type="evidence" value="ECO:0000318"/>
    <property type="project" value="GO_Central"/>
</dbReference>
<dbReference type="FunFam" id="1.20.1640.10:FF:000001">
    <property type="entry name" value="Efflux pump membrane transporter"/>
    <property type="match status" value="1"/>
</dbReference>
<dbReference type="FunFam" id="3.30.70.1430:FF:000001">
    <property type="entry name" value="Efflux pump membrane transporter"/>
    <property type="match status" value="1"/>
</dbReference>
<dbReference type="FunFam" id="3.30.2090.10:FF:000004">
    <property type="entry name" value="Multidrug resistance protein MdtC"/>
    <property type="match status" value="1"/>
</dbReference>
<dbReference type="FunFam" id="3.30.2090.10:FF:000005">
    <property type="entry name" value="Multidrug resistance protein MdtC"/>
    <property type="match status" value="1"/>
</dbReference>
<dbReference type="FunFam" id="3.30.70.1430:FF:000004">
    <property type="entry name" value="Multidrug resistance protein MdtC"/>
    <property type="match status" value="1"/>
</dbReference>
<dbReference type="Gene3D" id="3.30.70.1430">
    <property type="entry name" value="Multidrug efflux transporter AcrB pore domain"/>
    <property type="match status" value="2"/>
</dbReference>
<dbReference type="Gene3D" id="3.30.70.1440">
    <property type="entry name" value="Multidrug efflux transporter AcrB pore domain"/>
    <property type="match status" value="1"/>
</dbReference>
<dbReference type="Gene3D" id="3.30.70.1320">
    <property type="entry name" value="Multidrug efflux transporter AcrB pore domain like"/>
    <property type="match status" value="1"/>
</dbReference>
<dbReference type="Gene3D" id="3.30.2090.10">
    <property type="entry name" value="Multidrug efflux transporter AcrB TolC docking domain, DN and DC subdomains"/>
    <property type="match status" value="2"/>
</dbReference>
<dbReference type="Gene3D" id="1.20.1640.10">
    <property type="entry name" value="Multidrug efflux transporter AcrB transmembrane domain"/>
    <property type="match status" value="2"/>
</dbReference>
<dbReference type="HAMAP" id="MF_01424">
    <property type="entry name" value="MdtC"/>
    <property type="match status" value="1"/>
</dbReference>
<dbReference type="InterPro" id="IPR027463">
    <property type="entry name" value="AcrB_DN_DC_subdom"/>
</dbReference>
<dbReference type="InterPro" id="IPR001036">
    <property type="entry name" value="Acrflvin-R"/>
</dbReference>
<dbReference type="InterPro" id="IPR023931">
    <property type="entry name" value="Multidrug-R_MdtC"/>
</dbReference>
<dbReference type="NCBIfam" id="NF007905">
    <property type="entry name" value="PRK10614.1"/>
    <property type="match status" value="1"/>
</dbReference>
<dbReference type="NCBIfam" id="NF033617">
    <property type="entry name" value="RND_permease_2"/>
    <property type="match status" value="1"/>
</dbReference>
<dbReference type="PANTHER" id="PTHR32063">
    <property type="match status" value="1"/>
</dbReference>
<dbReference type="PANTHER" id="PTHR32063:SF34">
    <property type="entry name" value="MULTIDRUG RESISTANCE PROTEIN MDTC"/>
    <property type="match status" value="1"/>
</dbReference>
<dbReference type="Pfam" id="PF00873">
    <property type="entry name" value="ACR_tran"/>
    <property type="match status" value="1"/>
</dbReference>
<dbReference type="PRINTS" id="PR00702">
    <property type="entry name" value="ACRIFLAVINRP"/>
</dbReference>
<dbReference type="SUPFAM" id="SSF82693">
    <property type="entry name" value="Multidrug efflux transporter AcrB pore domain, PN1, PN2, PC1 and PC2 subdomains"/>
    <property type="match status" value="4"/>
</dbReference>
<dbReference type="SUPFAM" id="SSF82714">
    <property type="entry name" value="Multidrug efflux transporter AcrB TolC docking domain, DN and DC subdomains"/>
    <property type="match status" value="2"/>
</dbReference>
<dbReference type="SUPFAM" id="SSF82866">
    <property type="entry name" value="Multidrug efflux transporter AcrB transmembrane domain"/>
    <property type="match status" value="2"/>
</dbReference>
<proteinExistence type="inferred from homology"/>
<organism>
    <name type="scientific">Salmonella typhimurium (strain LT2 / SGSC1412 / ATCC 700720)</name>
    <dbReference type="NCBI Taxonomy" id="99287"/>
    <lineage>
        <taxon>Bacteria</taxon>
        <taxon>Pseudomonadati</taxon>
        <taxon>Pseudomonadota</taxon>
        <taxon>Gammaproteobacteria</taxon>
        <taxon>Enterobacterales</taxon>
        <taxon>Enterobacteriaceae</taxon>
        <taxon>Salmonella</taxon>
    </lineage>
</organism>
<protein>
    <recommendedName>
        <fullName evidence="2">Multidrug resistance protein MdtC</fullName>
    </recommendedName>
    <alternativeName>
        <fullName evidence="2">Multidrug transporter MdtC</fullName>
    </alternativeName>
</protein>
<name>MDTC_SALTY</name>
<gene>
    <name evidence="2" type="primary">mdtC</name>
    <name type="ordered locus">STM2128</name>
</gene>
<accession>Q8ZNQ1</accession>
<keyword id="KW-0997">Cell inner membrane</keyword>
<keyword id="KW-1003">Cell membrane</keyword>
<keyword id="KW-0472">Membrane</keyword>
<keyword id="KW-1185">Reference proteome</keyword>
<keyword id="KW-0812">Transmembrane</keyword>
<keyword id="KW-1133">Transmembrane helix</keyword>
<keyword id="KW-0813">Transport</keyword>